<name>RL34_CAMLR</name>
<evidence type="ECO:0000255" key="1">
    <source>
        <dbReference type="HAMAP-Rule" id="MF_00391"/>
    </source>
</evidence>
<evidence type="ECO:0000305" key="2"/>
<organism>
    <name type="scientific">Campylobacter lari (strain RM2100 / D67 / ATCC BAA-1060)</name>
    <dbReference type="NCBI Taxonomy" id="306263"/>
    <lineage>
        <taxon>Bacteria</taxon>
        <taxon>Pseudomonadati</taxon>
        <taxon>Campylobacterota</taxon>
        <taxon>Epsilonproteobacteria</taxon>
        <taxon>Campylobacterales</taxon>
        <taxon>Campylobacteraceae</taxon>
        <taxon>Campylobacter</taxon>
    </lineage>
</organism>
<gene>
    <name evidence="1" type="primary">rpmH</name>
    <name type="ordered locus">Cla_0553</name>
</gene>
<feature type="chain" id="PRO_1000134432" description="Large ribosomal subunit protein bL34">
    <location>
        <begin position="1"/>
        <end position="44"/>
    </location>
</feature>
<comment type="similarity">
    <text evidence="1">Belongs to the bacterial ribosomal protein bL34 family.</text>
</comment>
<reference key="1">
    <citation type="journal article" date="2008" name="Foodborne Pathog. Dis.">
        <title>The complete genome sequence and analysis of the human pathogen Campylobacter lari.</title>
        <authorList>
            <person name="Miller W.G."/>
            <person name="Wang G."/>
            <person name="Binnewies T.T."/>
            <person name="Parker C.T."/>
        </authorList>
    </citation>
    <scope>NUCLEOTIDE SEQUENCE [LARGE SCALE GENOMIC DNA]</scope>
    <source>
        <strain>RM2100 / D67 / ATCC BAA-1060</strain>
    </source>
</reference>
<keyword id="KW-1185">Reference proteome</keyword>
<keyword id="KW-0687">Ribonucleoprotein</keyword>
<keyword id="KW-0689">Ribosomal protein</keyword>
<sequence>MKRTYQPHKTPKKRTHGFRVRMKSKNGRKVINARRAKGRKRLAV</sequence>
<protein>
    <recommendedName>
        <fullName evidence="1">Large ribosomal subunit protein bL34</fullName>
    </recommendedName>
    <alternativeName>
        <fullName evidence="2">50S ribosomal protein L34</fullName>
    </alternativeName>
</protein>
<dbReference type="EMBL" id="CP000932">
    <property type="protein sequence ID" value="ACM63887.1"/>
    <property type="molecule type" value="Genomic_DNA"/>
</dbReference>
<dbReference type="RefSeq" id="WP_012661270.1">
    <property type="nucleotide sequence ID" value="NC_012039.1"/>
</dbReference>
<dbReference type="SMR" id="B9KFQ2"/>
<dbReference type="STRING" id="306263.Cla_0553"/>
<dbReference type="GeneID" id="93004648"/>
<dbReference type="KEGG" id="cla:CLA_0553"/>
<dbReference type="eggNOG" id="COG0230">
    <property type="taxonomic scope" value="Bacteria"/>
</dbReference>
<dbReference type="HOGENOM" id="CLU_129938_2_0_7"/>
<dbReference type="Proteomes" id="UP000007727">
    <property type="component" value="Chromosome"/>
</dbReference>
<dbReference type="GO" id="GO:1990904">
    <property type="term" value="C:ribonucleoprotein complex"/>
    <property type="evidence" value="ECO:0007669"/>
    <property type="project" value="UniProtKB-KW"/>
</dbReference>
<dbReference type="GO" id="GO:0005840">
    <property type="term" value="C:ribosome"/>
    <property type="evidence" value="ECO:0007669"/>
    <property type="project" value="UniProtKB-KW"/>
</dbReference>
<dbReference type="GO" id="GO:0003735">
    <property type="term" value="F:structural constituent of ribosome"/>
    <property type="evidence" value="ECO:0007669"/>
    <property type="project" value="InterPro"/>
</dbReference>
<dbReference type="GO" id="GO:0006412">
    <property type="term" value="P:translation"/>
    <property type="evidence" value="ECO:0007669"/>
    <property type="project" value="UniProtKB-UniRule"/>
</dbReference>
<dbReference type="FunFam" id="1.10.287.3980:FF:000001">
    <property type="entry name" value="Mitochondrial ribosomal protein L34"/>
    <property type="match status" value="1"/>
</dbReference>
<dbReference type="Gene3D" id="1.10.287.3980">
    <property type="match status" value="1"/>
</dbReference>
<dbReference type="HAMAP" id="MF_00391">
    <property type="entry name" value="Ribosomal_bL34"/>
    <property type="match status" value="1"/>
</dbReference>
<dbReference type="InterPro" id="IPR000271">
    <property type="entry name" value="Ribosomal_bL34"/>
</dbReference>
<dbReference type="InterPro" id="IPR020939">
    <property type="entry name" value="Ribosomal_bL34_CS"/>
</dbReference>
<dbReference type="NCBIfam" id="TIGR01030">
    <property type="entry name" value="rpmH_bact"/>
    <property type="match status" value="1"/>
</dbReference>
<dbReference type="PANTHER" id="PTHR14503:SF4">
    <property type="entry name" value="LARGE RIBOSOMAL SUBUNIT PROTEIN BL34M"/>
    <property type="match status" value="1"/>
</dbReference>
<dbReference type="PANTHER" id="PTHR14503">
    <property type="entry name" value="MITOCHONDRIAL RIBOSOMAL PROTEIN 34 FAMILY MEMBER"/>
    <property type="match status" value="1"/>
</dbReference>
<dbReference type="Pfam" id="PF00468">
    <property type="entry name" value="Ribosomal_L34"/>
    <property type="match status" value="1"/>
</dbReference>
<dbReference type="PROSITE" id="PS00784">
    <property type="entry name" value="RIBOSOMAL_L34"/>
    <property type="match status" value="1"/>
</dbReference>
<proteinExistence type="inferred from homology"/>
<accession>B9KFQ2</accession>